<dbReference type="EC" id="6.3.1.19" evidence="1"/>
<dbReference type="EMBL" id="CP000474">
    <property type="protein sequence ID" value="ABM10015.1"/>
    <property type="molecule type" value="Genomic_DNA"/>
</dbReference>
<dbReference type="RefSeq" id="WP_011774865.1">
    <property type="nucleotide sequence ID" value="NC_008711.1"/>
</dbReference>
<dbReference type="SMR" id="A1R6Q9"/>
<dbReference type="STRING" id="290340.AAur_2179"/>
<dbReference type="MEROPS" id="U72.001"/>
<dbReference type="KEGG" id="aau:AAur_2179"/>
<dbReference type="eggNOG" id="COG0638">
    <property type="taxonomic scope" value="Bacteria"/>
</dbReference>
<dbReference type="HOGENOM" id="CLU_040524_0_1_11"/>
<dbReference type="OrthoDB" id="9760627at2"/>
<dbReference type="BRENDA" id="6.3.1.19">
    <property type="organism ID" value="441"/>
</dbReference>
<dbReference type="UniPathway" id="UPA00997"/>
<dbReference type="UniPathway" id="UPA00998"/>
<dbReference type="Proteomes" id="UP000000637">
    <property type="component" value="Chromosome"/>
</dbReference>
<dbReference type="GO" id="GO:0005524">
    <property type="term" value="F:ATP binding"/>
    <property type="evidence" value="ECO:0007669"/>
    <property type="project" value="UniProtKB-UniRule"/>
</dbReference>
<dbReference type="GO" id="GO:0016879">
    <property type="term" value="F:ligase activity, forming carbon-nitrogen bonds"/>
    <property type="evidence" value="ECO:0007669"/>
    <property type="project" value="InterPro"/>
</dbReference>
<dbReference type="GO" id="GO:0000287">
    <property type="term" value="F:magnesium ion binding"/>
    <property type="evidence" value="ECO:0007669"/>
    <property type="project" value="UniProtKB-UniRule"/>
</dbReference>
<dbReference type="GO" id="GO:0019787">
    <property type="term" value="F:ubiquitin-like protein transferase activity"/>
    <property type="evidence" value="ECO:0007669"/>
    <property type="project" value="UniProtKB-UniRule"/>
</dbReference>
<dbReference type="GO" id="GO:0019941">
    <property type="term" value="P:modification-dependent protein catabolic process"/>
    <property type="evidence" value="ECO:0007669"/>
    <property type="project" value="UniProtKB-UniRule"/>
</dbReference>
<dbReference type="GO" id="GO:0010498">
    <property type="term" value="P:proteasomal protein catabolic process"/>
    <property type="evidence" value="ECO:0007669"/>
    <property type="project" value="UniProtKB-UniRule"/>
</dbReference>
<dbReference type="GO" id="GO:0070490">
    <property type="term" value="P:protein pupylation"/>
    <property type="evidence" value="ECO:0007669"/>
    <property type="project" value="UniProtKB-UniRule"/>
</dbReference>
<dbReference type="HAMAP" id="MF_02111">
    <property type="entry name" value="Pup_ligase"/>
    <property type="match status" value="1"/>
</dbReference>
<dbReference type="InterPro" id="IPR022279">
    <property type="entry name" value="Pup_ligase"/>
</dbReference>
<dbReference type="InterPro" id="IPR004347">
    <property type="entry name" value="Pup_ligase/deamidase"/>
</dbReference>
<dbReference type="NCBIfam" id="TIGR03686">
    <property type="entry name" value="pupylate_PafA"/>
    <property type="match status" value="1"/>
</dbReference>
<dbReference type="PANTHER" id="PTHR42307">
    <property type="entry name" value="PUP DEAMIDASE/DEPUPYLASE"/>
    <property type="match status" value="1"/>
</dbReference>
<dbReference type="PANTHER" id="PTHR42307:SF3">
    <property type="entry name" value="PUP--PROTEIN LIGASE"/>
    <property type="match status" value="1"/>
</dbReference>
<dbReference type="Pfam" id="PF03136">
    <property type="entry name" value="Pup_ligase"/>
    <property type="match status" value="1"/>
</dbReference>
<dbReference type="PIRSF" id="PIRSF018077">
    <property type="entry name" value="UCP018077"/>
    <property type="match status" value="1"/>
</dbReference>
<keyword id="KW-0067">ATP-binding</keyword>
<keyword id="KW-0436">Ligase</keyword>
<keyword id="KW-0460">Magnesium</keyword>
<keyword id="KW-0479">Metal-binding</keyword>
<keyword id="KW-0547">Nucleotide-binding</keyword>
<keyword id="KW-0833">Ubl conjugation pathway</keyword>
<gene>
    <name evidence="1" type="primary">pafA</name>
    <name type="ordered locus">AAur_2179</name>
</gene>
<comment type="function">
    <text evidence="1">Catalyzes the covalent attachment of the prokaryotic ubiquitin-like protein modifier Pup to the proteasomal substrate proteins, thereby targeting them for proteasomal degradation. This tagging system is termed pupylation. The ligation reaction involves the side-chain carboxylate of the C-terminal glutamate of Pup and the side-chain amino group of a substrate lysine.</text>
</comment>
<comment type="catalytic activity">
    <reaction evidence="1">
        <text>ATP + [prokaryotic ubiquitin-like protein]-L-glutamate + [protein]-L-lysine = ADP + phosphate + N(6)-([prokaryotic ubiquitin-like protein]-gamma-L-glutamyl)-[protein]-L-lysine.</text>
        <dbReference type="EC" id="6.3.1.19"/>
    </reaction>
</comment>
<comment type="pathway">
    <text evidence="1">Protein degradation; proteasomal Pup-dependent pathway.</text>
</comment>
<comment type="pathway">
    <text evidence="1">Protein modification; protein pupylation.</text>
</comment>
<comment type="miscellaneous">
    <text evidence="1">The reaction mechanism probably proceeds via the activation of Pup by phosphorylation of its C-terminal glutamate, which is then subject to nucleophilic attack by the substrate lysine, resulting in an isopeptide bond and the release of phosphate as a good leaving group.</text>
</comment>
<comment type="similarity">
    <text evidence="1">Belongs to the Pup ligase/Pup deamidase family. Pup-conjugating enzyme subfamily.</text>
</comment>
<name>PAFA_PAEAT</name>
<protein>
    <recommendedName>
        <fullName evidence="1">Pup--protein ligase</fullName>
        <ecNumber evidence="1">6.3.1.19</ecNumber>
    </recommendedName>
    <alternativeName>
        <fullName evidence="1">Proteasome accessory factor A</fullName>
    </alternativeName>
    <alternativeName>
        <fullName evidence="1">Pup-conjugating enzyme</fullName>
    </alternativeName>
</protein>
<evidence type="ECO:0000255" key="1">
    <source>
        <dbReference type="HAMAP-Rule" id="MF_02111"/>
    </source>
</evidence>
<feature type="chain" id="PRO_0000395892" description="Pup--protein ligase">
    <location>
        <begin position="1"/>
        <end position="454"/>
    </location>
</feature>
<feature type="active site" description="Proton acceptor" evidence="1">
    <location>
        <position position="57"/>
    </location>
</feature>
<feature type="binding site" evidence="1">
    <location>
        <position position="9"/>
    </location>
    <ligand>
        <name>Mg(2+)</name>
        <dbReference type="ChEBI" id="CHEBI:18420"/>
    </ligand>
</feature>
<feature type="binding site" evidence="1">
    <location>
        <position position="53"/>
    </location>
    <ligand>
        <name>ATP</name>
        <dbReference type="ChEBI" id="CHEBI:30616"/>
    </ligand>
</feature>
<feature type="binding site" evidence="1">
    <location>
        <position position="55"/>
    </location>
    <ligand>
        <name>Mg(2+)</name>
        <dbReference type="ChEBI" id="CHEBI:18420"/>
    </ligand>
</feature>
<feature type="binding site" evidence="1">
    <location>
        <position position="63"/>
    </location>
    <ligand>
        <name>Mg(2+)</name>
        <dbReference type="ChEBI" id="CHEBI:18420"/>
    </ligand>
</feature>
<feature type="binding site" evidence="1">
    <location>
        <position position="66"/>
    </location>
    <ligand>
        <name>ATP</name>
        <dbReference type="ChEBI" id="CHEBI:30616"/>
    </ligand>
</feature>
<feature type="binding site" evidence="1">
    <location>
        <position position="420"/>
    </location>
    <ligand>
        <name>ATP</name>
        <dbReference type="ChEBI" id="CHEBI:30616"/>
    </ligand>
</feature>
<organism>
    <name type="scientific">Paenarthrobacter aurescens (strain TC1)</name>
    <dbReference type="NCBI Taxonomy" id="290340"/>
    <lineage>
        <taxon>Bacteria</taxon>
        <taxon>Bacillati</taxon>
        <taxon>Actinomycetota</taxon>
        <taxon>Actinomycetes</taxon>
        <taxon>Micrococcales</taxon>
        <taxon>Micrococcaceae</taxon>
        <taxon>Paenarthrobacter</taxon>
    </lineage>
</organism>
<reference key="1">
    <citation type="journal article" date="2006" name="PLoS Genet.">
        <title>Secrets of soil survival revealed by the genome sequence of Arthrobacter aurescens TC1.</title>
        <authorList>
            <person name="Mongodin E.F."/>
            <person name="Shapir N."/>
            <person name="Daugherty S.C."/>
            <person name="DeBoy R.T."/>
            <person name="Emerson J.B."/>
            <person name="Shvartzbeyn A."/>
            <person name="Radune D."/>
            <person name="Vamathevan J."/>
            <person name="Riggs F."/>
            <person name="Grinberg V."/>
            <person name="Khouri H.M."/>
            <person name="Wackett L.P."/>
            <person name="Nelson K.E."/>
            <person name="Sadowsky M.J."/>
        </authorList>
    </citation>
    <scope>NUCLEOTIDE SEQUENCE [LARGE SCALE GENOMIC DNA]</scope>
    <source>
        <strain>TC1</strain>
    </source>
</reference>
<sequence length="454" mass="51202">MDKRIFGIETEFGISYSSPDSRPLAPEEVARYLFRKVVSWGRSSNVFLTNGSRLYLDVGSHPEYATAECDDLAQLIAHDRAGELILDDLVDEAQARLAAEGFNGTVYLFKNNTDSAGNSYGSHENYLIPRRGEFSRLAEILIPFLVTRQLIAGAGKVLKTPHGATFAFSQRADHIWEGVSSATTRSRPIINTRDEPHADAEFYRRLHVIVGDSNMSETSALLKVGTVDLILRMIEAGVIMRDMRMENPIRSIREISHDLTGRALVRLANGRQLTALDIQREYLNKVTDFVATNGAHNAHVPLILDLWQRTLDAIESGDTSTIDTEVDWAIKKKLMDGYMRRHDLSLDSPRIAQLDLTYHDISRQRGIFFLLQARGQARRLVTETDVKDAVDAPPQTTRAKLRGDFVRRAQELGRDYTVDWVHLKLNDRAHQTILCKDPFRSVDERVDALLDSMG</sequence>
<accession>A1R6Q9</accession>
<proteinExistence type="inferred from homology"/>